<accession>Q8ZGV2</accession>
<accession>Q0WHM5</accession>
<sequence length="312" mass="34850">MRVILAPMEGVLDSLVRELLSEVNDYDLCITEFLRVVDQLLPAKSFYRLCPELHNQSRTQSGTLVRIQLLGQYPEWLAENAARAVALGSYGVDLNCGCPSKLVNGSGGGATLLKDPELIYQGAKAMRAAVPAHLPVTVKIRLGWDSGDRQFEIADAVQQAGATELAVHGRTKEDGYQAERINWQAIGEIRQRLTIPVIANGEIWDYQSAQECMKVTGCDAVMLGRGALNVPNLSRVVKYNEPRMPWLEVVKLLQKYVQLEKQGDTGLYHVARIKQWLGYLRKEYTEATDLFGEIRALKNSKDIALAIQRINR</sequence>
<feature type="chain" id="PRO_0000162129" description="tRNA-dihydrouridine(16) synthase">
    <location>
        <begin position="1"/>
        <end position="312"/>
    </location>
</feature>
<feature type="active site" description="Proton donor" evidence="1">
    <location>
        <position position="98"/>
    </location>
</feature>
<feature type="binding site" evidence="1">
    <location>
        <begin position="7"/>
        <end position="9"/>
    </location>
    <ligand>
        <name>FMN</name>
        <dbReference type="ChEBI" id="CHEBI:58210"/>
    </ligand>
</feature>
<feature type="binding site" evidence="1">
    <location>
        <position position="68"/>
    </location>
    <ligand>
        <name>FMN</name>
        <dbReference type="ChEBI" id="CHEBI:58210"/>
    </ligand>
</feature>
<feature type="binding site" evidence="1">
    <location>
        <position position="139"/>
    </location>
    <ligand>
        <name>FMN</name>
        <dbReference type="ChEBI" id="CHEBI:58210"/>
    </ligand>
</feature>
<feature type="binding site" evidence="1">
    <location>
        <begin position="200"/>
        <end position="202"/>
    </location>
    <ligand>
        <name>FMN</name>
        <dbReference type="ChEBI" id="CHEBI:58210"/>
    </ligand>
</feature>
<feature type="binding site" evidence="1">
    <location>
        <begin position="224"/>
        <end position="225"/>
    </location>
    <ligand>
        <name>FMN</name>
        <dbReference type="ChEBI" id="CHEBI:58210"/>
    </ligand>
</feature>
<feature type="site" description="Interacts with tRNA; defines subfamily-specific binding signature" evidence="1">
    <location>
        <position position="35"/>
    </location>
</feature>
<feature type="site" description="Interacts with tRNA" evidence="1">
    <location>
        <position position="95"/>
    </location>
</feature>
<feature type="site" description="Interacts with tRNA" evidence="1">
    <location>
        <position position="176"/>
    </location>
</feature>
<feature type="site" description="Interacts with tRNA; defines subfamily-specific binding signature" evidence="1">
    <location>
        <position position="272"/>
    </location>
</feature>
<feature type="site" description="Interacts with tRNA; defines subfamily-specific binding signature" evidence="1">
    <location>
        <position position="274"/>
    </location>
</feature>
<feature type="site" description="Interacts with tRNA" evidence="1">
    <location>
        <position position="279"/>
    </location>
</feature>
<feature type="site" description="Interacts with tRNA; defines subfamily-specific binding signature" evidence="1">
    <location>
        <position position="295"/>
    </location>
</feature>
<reference key="1">
    <citation type="journal article" date="2001" name="Nature">
        <title>Genome sequence of Yersinia pestis, the causative agent of plague.</title>
        <authorList>
            <person name="Parkhill J."/>
            <person name="Wren B.W."/>
            <person name="Thomson N.R."/>
            <person name="Titball R.W."/>
            <person name="Holden M.T.G."/>
            <person name="Prentice M.B."/>
            <person name="Sebaihia M."/>
            <person name="James K.D."/>
            <person name="Churcher C.M."/>
            <person name="Mungall K.L."/>
            <person name="Baker S."/>
            <person name="Basham D."/>
            <person name="Bentley S.D."/>
            <person name="Brooks K."/>
            <person name="Cerdeno-Tarraga A.-M."/>
            <person name="Chillingworth T."/>
            <person name="Cronin A."/>
            <person name="Davies R.M."/>
            <person name="Davis P."/>
            <person name="Dougan G."/>
            <person name="Feltwell T."/>
            <person name="Hamlin N."/>
            <person name="Holroyd S."/>
            <person name="Jagels K."/>
            <person name="Karlyshev A.V."/>
            <person name="Leather S."/>
            <person name="Moule S."/>
            <person name="Oyston P.C.F."/>
            <person name="Quail M.A."/>
            <person name="Rutherford K.M."/>
            <person name="Simmonds M."/>
            <person name="Skelton J."/>
            <person name="Stevens K."/>
            <person name="Whitehead S."/>
            <person name="Barrell B.G."/>
        </authorList>
    </citation>
    <scope>NUCLEOTIDE SEQUENCE [LARGE SCALE GENOMIC DNA]</scope>
    <source>
        <strain>CO-92 / Biovar Orientalis</strain>
    </source>
</reference>
<reference key="2">
    <citation type="journal article" date="2002" name="J. Bacteriol.">
        <title>Genome sequence of Yersinia pestis KIM.</title>
        <authorList>
            <person name="Deng W."/>
            <person name="Burland V."/>
            <person name="Plunkett G. III"/>
            <person name="Boutin A."/>
            <person name="Mayhew G.F."/>
            <person name="Liss P."/>
            <person name="Perna N.T."/>
            <person name="Rose D.J."/>
            <person name="Mau B."/>
            <person name="Zhou S."/>
            <person name="Schwartz D.C."/>
            <person name="Fetherston J.D."/>
            <person name="Lindler L.E."/>
            <person name="Brubaker R.R."/>
            <person name="Plano G.V."/>
            <person name="Straley S.C."/>
            <person name="McDonough K.A."/>
            <person name="Nilles M.L."/>
            <person name="Matson J.S."/>
            <person name="Blattner F.R."/>
            <person name="Perry R.D."/>
        </authorList>
    </citation>
    <scope>NUCLEOTIDE SEQUENCE [LARGE SCALE GENOMIC DNA]</scope>
    <source>
        <strain>KIM10+ / Biovar Mediaevalis</strain>
    </source>
</reference>
<reference key="3">
    <citation type="journal article" date="2004" name="DNA Res.">
        <title>Complete genome sequence of Yersinia pestis strain 91001, an isolate avirulent to humans.</title>
        <authorList>
            <person name="Song Y."/>
            <person name="Tong Z."/>
            <person name="Wang J."/>
            <person name="Wang L."/>
            <person name="Guo Z."/>
            <person name="Han Y."/>
            <person name="Zhang J."/>
            <person name="Pei D."/>
            <person name="Zhou D."/>
            <person name="Qin H."/>
            <person name="Pang X."/>
            <person name="Han Y."/>
            <person name="Zhai J."/>
            <person name="Li M."/>
            <person name="Cui B."/>
            <person name="Qi Z."/>
            <person name="Jin L."/>
            <person name="Dai R."/>
            <person name="Chen F."/>
            <person name="Li S."/>
            <person name="Ye C."/>
            <person name="Du Z."/>
            <person name="Lin W."/>
            <person name="Wang J."/>
            <person name="Yu J."/>
            <person name="Yang H."/>
            <person name="Wang J."/>
            <person name="Huang P."/>
            <person name="Yang R."/>
        </authorList>
    </citation>
    <scope>NUCLEOTIDE SEQUENCE [LARGE SCALE GENOMIC DNA]</scope>
    <source>
        <strain>91001 / Biovar Mediaevalis</strain>
    </source>
</reference>
<keyword id="KW-0285">Flavoprotein</keyword>
<keyword id="KW-0288">FMN</keyword>
<keyword id="KW-0521">NADP</keyword>
<keyword id="KW-0560">Oxidoreductase</keyword>
<keyword id="KW-1185">Reference proteome</keyword>
<keyword id="KW-0694">RNA-binding</keyword>
<keyword id="KW-0819">tRNA processing</keyword>
<keyword id="KW-0820">tRNA-binding</keyword>
<gene>
    <name evidence="1" type="primary">dusC</name>
    <name type="ordered locus">YPO1175</name>
    <name type="ordered locus">y3015</name>
    <name type="ordered locus">YP_0963</name>
</gene>
<evidence type="ECO:0000255" key="1">
    <source>
        <dbReference type="HAMAP-Rule" id="MF_02043"/>
    </source>
</evidence>
<evidence type="ECO:0000305" key="2"/>
<organism>
    <name type="scientific">Yersinia pestis</name>
    <dbReference type="NCBI Taxonomy" id="632"/>
    <lineage>
        <taxon>Bacteria</taxon>
        <taxon>Pseudomonadati</taxon>
        <taxon>Pseudomonadota</taxon>
        <taxon>Gammaproteobacteria</taxon>
        <taxon>Enterobacterales</taxon>
        <taxon>Yersiniaceae</taxon>
        <taxon>Yersinia</taxon>
    </lineage>
</organism>
<dbReference type="EC" id="1.3.1.-" evidence="1"/>
<dbReference type="EMBL" id="AL590842">
    <property type="protein sequence ID" value="CAL19839.1"/>
    <property type="status" value="ALT_INIT"/>
    <property type="molecule type" value="Genomic_DNA"/>
</dbReference>
<dbReference type="EMBL" id="AE009952">
    <property type="protein sequence ID" value="AAM86566.1"/>
    <property type="status" value="ALT_INIT"/>
    <property type="molecule type" value="Genomic_DNA"/>
</dbReference>
<dbReference type="EMBL" id="AE017042">
    <property type="protein sequence ID" value="AAS61217.1"/>
    <property type="status" value="ALT_INIT"/>
    <property type="molecule type" value="Genomic_DNA"/>
</dbReference>
<dbReference type="PIR" id="AE0144">
    <property type="entry name" value="AE0144"/>
</dbReference>
<dbReference type="RefSeq" id="WP_002228612.1">
    <property type="nucleotide sequence ID" value="NZ_WUCM01000017.1"/>
</dbReference>
<dbReference type="RefSeq" id="YP_002346213.1">
    <property type="nucleotide sequence ID" value="NC_003143.1"/>
</dbReference>
<dbReference type="SMR" id="Q8ZGV2"/>
<dbReference type="IntAct" id="Q8ZGV2">
    <property type="interactions" value="1"/>
</dbReference>
<dbReference type="STRING" id="214092.YPO1175"/>
<dbReference type="PaxDb" id="214092-YPO1175"/>
<dbReference type="DNASU" id="1147962"/>
<dbReference type="EnsemblBacteria" id="AAS61217">
    <property type="protein sequence ID" value="AAS61217"/>
    <property type="gene ID" value="YP_0963"/>
</dbReference>
<dbReference type="GeneID" id="57977314"/>
<dbReference type="KEGG" id="ype:YPO1175"/>
<dbReference type="KEGG" id="ypj:CH55_1374"/>
<dbReference type="KEGG" id="ypk:y3015"/>
<dbReference type="KEGG" id="ypl:CH46_3957"/>
<dbReference type="KEGG" id="ypm:YP_0963"/>
<dbReference type="KEGG" id="ypv:BZ15_2382"/>
<dbReference type="KEGG" id="ypw:CH59_669"/>
<dbReference type="PATRIC" id="fig|214092.21.peg.1473"/>
<dbReference type="eggNOG" id="COG0042">
    <property type="taxonomic scope" value="Bacteria"/>
</dbReference>
<dbReference type="HOGENOM" id="CLU_013299_0_4_6"/>
<dbReference type="Proteomes" id="UP000000815">
    <property type="component" value="Chromosome"/>
</dbReference>
<dbReference type="Proteomes" id="UP000001019">
    <property type="component" value="Chromosome"/>
</dbReference>
<dbReference type="Proteomes" id="UP000002490">
    <property type="component" value="Chromosome"/>
</dbReference>
<dbReference type="GO" id="GO:0050660">
    <property type="term" value="F:flavin adenine dinucleotide binding"/>
    <property type="evidence" value="ECO:0007669"/>
    <property type="project" value="InterPro"/>
</dbReference>
<dbReference type="GO" id="GO:0010181">
    <property type="term" value="F:FMN binding"/>
    <property type="evidence" value="ECO:0007669"/>
    <property type="project" value="UniProtKB-UniRule"/>
</dbReference>
<dbReference type="GO" id="GO:0000049">
    <property type="term" value="F:tRNA binding"/>
    <property type="evidence" value="ECO:0007669"/>
    <property type="project" value="UniProtKB-UniRule"/>
</dbReference>
<dbReference type="GO" id="GO:0102262">
    <property type="term" value="F:tRNA-dihydrouridine16 synthase activity"/>
    <property type="evidence" value="ECO:0007669"/>
    <property type="project" value="RHEA"/>
</dbReference>
<dbReference type="CDD" id="cd02801">
    <property type="entry name" value="DUS_like_FMN"/>
    <property type="match status" value="1"/>
</dbReference>
<dbReference type="Gene3D" id="3.20.20.70">
    <property type="entry name" value="Aldolase class I"/>
    <property type="match status" value="1"/>
</dbReference>
<dbReference type="Gene3D" id="1.20.225.30">
    <property type="entry name" value="Dihydrouridine synthase, C-terminal recognition domain"/>
    <property type="match status" value="1"/>
</dbReference>
<dbReference type="HAMAP" id="MF_02043">
    <property type="entry name" value="DusC_subfam"/>
    <property type="match status" value="1"/>
</dbReference>
<dbReference type="InterPro" id="IPR013785">
    <property type="entry name" value="Aldolase_TIM"/>
</dbReference>
<dbReference type="InterPro" id="IPR035587">
    <property type="entry name" value="DUS-like_FMN-bd"/>
</dbReference>
<dbReference type="InterPro" id="IPR001269">
    <property type="entry name" value="DUS_fam"/>
</dbReference>
<dbReference type="InterPro" id="IPR032886">
    <property type="entry name" value="DusC"/>
</dbReference>
<dbReference type="InterPro" id="IPR042270">
    <property type="entry name" value="DusC_C"/>
</dbReference>
<dbReference type="InterPro" id="IPR018517">
    <property type="entry name" value="tRNA_hU_synthase_CS"/>
</dbReference>
<dbReference type="NCBIfam" id="NF007838">
    <property type="entry name" value="PRK10550.1"/>
    <property type="match status" value="1"/>
</dbReference>
<dbReference type="PANTHER" id="PTHR11082">
    <property type="entry name" value="TRNA-DIHYDROURIDINE SYNTHASE"/>
    <property type="match status" value="1"/>
</dbReference>
<dbReference type="PANTHER" id="PTHR11082:SF26">
    <property type="entry name" value="TRNA-DIHYDROURIDINE(16) SYNTHASE"/>
    <property type="match status" value="1"/>
</dbReference>
<dbReference type="Pfam" id="PF01207">
    <property type="entry name" value="Dus"/>
    <property type="match status" value="1"/>
</dbReference>
<dbReference type="PIRSF" id="PIRSF006621">
    <property type="entry name" value="Dus"/>
    <property type="match status" value="1"/>
</dbReference>
<dbReference type="SUPFAM" id="SSF51395">
    <property type="entry name" value="FMN-linked oxidoreductases"/>
    <property type="match status" value="1"/>
</dbReference>
<dbReference type="PROSITE" id="PS01136">
    <property type="entry name" value="UPF0034"/>
    <property type="match status" value="1"/>
</dbReference>
<name>DUSC_YERPE</name>
<comment type="function">
    <text evidence="1">Catalyzes the synthesis of 5,6-dihydrouridine (D), a modified base found in the D-loop of most tRNAs, via the reduction of the C5-C6 double bond in target uridines. Specifically modifies U16 in tRNAs.</text>
</comment>
<comment type="catalytic activity">
    <reaction evidence="1">
        <text>5,6-dihydrouridine(16) in tRNA + NADP(+) = uridine(16) in tRNA + NADPH + H(+)</text>
        <dbReference type="Rhea" id="RHEA:53376"/>
        <dbReference type="Rhea" id="RHEA-COMP:13543"/>
        <dbReference type="Rhea" id="RHEA-COMP:13544"/>
        <dbReference type="ChEBI" id="CHEBI:15378"/>
        <dbReference type="ChEBI" id="CHEBI:57783"/>
        <dbReference type="ChEBI" id="CHEBI:58349"/>
        <dbReference type="ChEBI" id="CHEBI:65315"/>
        <dbReference type="ChEBI" id="CHEBI:74443"/>
    </reaction>
</comment>
<comment type="catalytic activity">
    <reaction evidence="1">
        <text>5,6-dihydrouridine(16) in tRNA + NAD(+) = uridine(16) in tRNA + NADH + H(+)</text>
        <dbReference type="Rhea" id="RHEA:53380"/>
        <dbReference type="Rhea" id="RHEA-COMP:13543"/>
        <dbReference type="Rhea" id="RHEA-COMP:13544"/>
        <dbReference type="ChEBI" id="CHEBI:15378"/>
        <dbReference type="ChEBI" id="CHEBI:57540"/>
        <dbReference type="ChEBI" id="CHEBI:57945"/>
        <dbReference type="ChEBI" id="CHEBI:65315"/>
        <dbReference type="ChEBI" id="CHEBI:74443"/>
    </reaction>
</comment>
<comment type="cofactor">
    <cofactor evidence="1">
        <name>FMN</name>
        <dbReference type="ChEBI" id="CHEBI:58210"/>
    </cofactor>
</comment>
<comment type="similarity">
    <text evidence="1">Belongs to the Dus family. DusC subfamily.</text>
</comment>
<comment type="sequence caution" evidence="2">
    <conflict type="erroneous initiation">
        <sequence resource="EMBL-CDS" id="AAM86566"/>
    </conflict>
</comment>
<comment type="sequence caution" evidence="2">
    <conflict type="erroneous initiation">
        <sequence resource="EMBL-CDS" id="AAS61217"/>
    </conflict>
</comment>
<comment type="sequence caution" evidence="2">
    <conflict type="erroneous initiation">
        <sequence resource="EMBL-CDS" id="CAL19839"/>
    </conflict>
</comment>
<protein>
    <recommendedName>
        <fullName evidence="1">tRNA-dihydrouridine(16) synthase</fullName>
        <ecNumber evidence="1">1.3.1.-</ecNumber>
    </recommendedName>
    <alternativeName>
        <fullName evidence="1">U16-specific dihydrouridine synthase</fullName>
        <shortName evidence="1">U16-specific Dus</shortName>
    </alternativeName>
    <alternativeName>
        <fullName evidence="1">tRNA-dihydrouridine synthase C</fullName>
    </alternativeName>
</protein>
<proteinExistence type="inferred from homology"/>